<proteinExistence type="inferred from homology"/>
<feature type="chain" id="PRO_0000141627" description="Glutaredoxin-2">
    <location>
        <begin position="1"/>
        <end position="124"/>
    </location>
</feature>
<feature type="disulfide bond" description="Redox-active" evidence="1">
    <location>
        <begin position="13"/>
        <end position="16"/>
    </location>
</feature>
<reference key="1">
    <citation type="journal article" date="1990" name="Virology">
        <title>The complete DNA sequence of vaccinia virus.</title>
        <authorList>
            <person name="Goebel S.J."/>
            <person name="Johnson G.P."/>
            <person name="Perkus M.E."/>
            <person name="Davis S.W."/>
            <person name="Winslow J.P."/>
            <person name="Paoletti E."/>
        </authorList>
    </citation>
    <scope>NUCLEOTIDE SEQUENCE [LARGE SCALE GENOMIC DNA]</scope>
</reference>
<reference key="2">
    <citation type="journal article" date="1990" name="Virology">
        <title>Appendix to 'The complete DNA sequence of vaccinia virus'.</title>
        <authorList>
            <person name="Goebel S.J."/>
            <person name="Johnson G.P."/>
            <person name="Perkus M.E."/>
            <person name="Davis S.W."/>
            <person name="Winslow J.P."/>
            <person name="Paoletti E."/>
        </authorList>
    </citation>
    <scope>NUCLEOTIDE SEQUENCE [LARGE SCALE GENOMIC DNA]</scope>
</reference>
<protein>
    <recommendedName>
        <fullName>Glutaredoxin-2</fullName>
    </recommendedName>
</protein>
<gene>
    <name type="primary">OPG088</name>
    <name type="ORF">G4L</name>
</gene>
<keyword id="KW-1015">Disulfide bond</keyword>
<keyword id="KW-0249">Electron transport</keyword>
<keyword id="KW-1035">Host cytoplasm</keyword>
<keyword id="KW-0676">Redox-active center</keyword>
<keyword id="KW-1185">Reference proteome</keyword>
<keyword id="KW-0813">Transport</keyword>
<sequence length="124" mass="13987">MKNVLIIFGKPYCSICENVSDAVEELKSEYDILHVDILSFFLKDGDSSMLGDVKRGTLIGNFAAHLSNYIVSIFKYNPQTKQMAFVDINKSLDFTKTDKSLVNLEILKSEIEKATYGVWPPVTE</sequence>
<dbReference type="EMBL" id="M35027">
    <property type="protein sequence ID" value="AAA48068.1"/>
    <property type="molecule type" value="Genomic_DNA"/>
</dbReference>
<dbReference type="PIR" id="I42511">
    <property type="entry name" value="I42511"/>
</dbReference>
<dbReference type="SMR" id="P68461"/>
<dbReference type="Proteomes" id="UP000008269">
    <property type="component" value="Segment"/>
</dbReference>
<dbReference type="GO" id="GO:0030430">
    <property type="term" value="C:host cell cytoplasm"/>
    <property type="evidence" value="ECO:0007669"/>
    <property type="project" value="UniProtKB-SubCell"/>
</dbReference>
<dbReference type="Gene3D" id="3.40.30.10">
    <property type="entry name" value="Glutaredoxin"/>
    <property type="match status" value="1"/>
</dbReference>
<dbReference type="InterPro" id="IPR008554">
    <property type="entry name" value="Glutaredoxin-like"/>
</dbReference>
<dbReference type="InterPro" id="IPR036249">
    <property type="entry name" value="Thioredoxin-like_sf"/>
</dbReference>
<dbReference type="Pfam" id="PF05768">
    <property type="entry name" value="Glrx-like"/>
    <property type="match status" value="1"/>
</dbReference>
<dbReference type="SUPFAM" id="SSF52833">
    <property type="entry name" value="Thioredoxin-like"/>
    <property type="match status" value="1"/>
</dbReference>
<accession>P68461</accession>
<accession>P21025</accession>
<organism>
    <name type="scientific">Vaccinia virus (strain Copenhagen)</name>
    <name type="common">VACV</name>
    <dbReference type="NCBI Taxonomy" id="10249"/>
    <lineage>
        <taxon>Viruses</taxon>
        <taxon>Varidnaviria</taxon>
        <taxon>Bamfordvirae</taxon>
        <taxon>Nucleocytoviricota</taxon>
        <taxon>Pokkesviricetes</taxon>
        <taxon>Chitovirales</taxon>
        <taxon>Poxviridae</taxon>
        <taxon>Chordopoxvirinae</taxon>
        <taxon>Orthopoxvirus</taxon>
        <taxon>Vaccinia virus</taxon>
    </lineage>
</organism>
<evidence type="ECO:0000250" key="1">
    <source>
        <dbReference type="UniProtKB" id="P68460"/>
    </source>
</evidence>
<evidence type="ECO:0000305" key="2"/>
<organismHost>
    <name type="scientific">Homo sapiens</name>
    <name type="common">Human</name>
    <dbReference type="NCBI Taxonomy" id="9606"/>
</organismHost>
<name>GLRX2_VACCC</name>
<comment type="function">
    <text evidence="1">Glutaredoxin necessary for virion morphogenesis and virus replication. Functions as a thiol-disulfide transfer protein between membrane-associated OPG128 and substrates OPG095 or OPG053. The complete pathway for formation of disulfide bonds in intracellular virion membrane proteins sequentially involves oxidation of OPG072, OPG128 and OPG088. Exhibit thioltransferase and dehydroascorbate reductase activities in vitro.</text>
</comment>
<comment type="subunit">
    <text evidence="1">Homodimer.</text>
</comment>
<comment type="subcellular location">
    <subcellularLocation>
        <location evidence="1">Host cytoplasm</location>
    </subcellularLocation>
</comment>
<comment type="induction">
    <text evidence="1">Expressed in the intermediate phase of the viral replicative cycle.</text>
</comment>
<comment type="similarity">
    <text evidence="2">Belongs to the glutaredoxin family.</text>
</comment>